<reference key="1">
    <citation type="journal article" date="1997" name="DNA Res.">
        <title>Construction of a contiguous 874-kb sequence of the Escherichia coli-K12 genome corresponding to 50.0-68.8 min on the linkage map and analysis of its sequence features.</title>
        <authorList>
            <person name="Yamamoto Y."/>
            <person name="Aiba H."/>
            <person name="Baba T."/>
            <person name="Hayashi K."/>
            <person name="Inada T."/>
            <person name="Isono K."/>
            <person name="Itoh T."/>
            <person name="Kimura S."/>
            <person name="Kitagawa M."/>
            <person name="Makino K."/>
            <person name="Miki T."/>
            <person name="Mitsuhashi N."/>
            <person name="Mizobuchi K."/>
            <person name="Mori H."/>
            <person name="Nakade S."/>
            <person name="Nakamura Y."/>
            <person name="Nashimoto H."/>
            <person name="Oshima T."/>
            <person name="Oyama S."/>
            <person name="Saito N."/>
            <person name="Sampei G."/>
            <person name="Satoh Y."/>
            <person name="Sivasundaram S."/>
            <person name="Tagami H."/>
            <person name="Takahashi H."/>
            <person name="Takeda J."/>
            <person name="Takemoto K."/>
            <person name="Uehara K."/>
            <person name="Wada C."/>
            <person name="Yamagata S."/>
            <person name="Horiuchi T."/>
        </authorList>
    </citation>
    <scope>NUCLEOTIDE SEQUENCE [LARGE SCALE GENOMIC DNA]</scope>
    <source>
        <strain>K12 / W3110 / ATCC 27325 / DSM 5911</strain>
    </source>
</reference>
<reference key="2">
    <citation type="journal article" date="1997" name="Science">
        <title>The complete genome sequence of Escherichia coli K-12.</title>
        <authorList>
            <person name="Blattner F.R."/>
            <person name="Plunkett G. III"/>
            <person name="Bloch C.A."/>
            <person name="Perna N.T."/>
            <person name="Burland V."/>
            <person name="Riley M."/>
            <person name="Collado-Vides J."/>
            <person name="Glasner J.D."/>
            <person name="Rode C.K."/>
            <person name="Mayhew G.F."/>
            <person name="Gregor J."/>
            <person name="Davis N.W."/>
            <person name="Kirkpatrick H.A."/>
            <person name="Goeden M.A."/>
            <person name="Rose D.J."/>
            <person name="Mau B."/>
            <person name="Shao Y."/>
        </authorList>
    </citation>
    <scope>NUCLEOTIDE SEQUENCE [LARGE SCALE GENOMIC DNA]</scope>
    <source>
        <strain>K12 / MG1655 / ATCC 47076</strain>
    </source>
</reference>
<reference key="3">
    <citation type="journal article" date="2006" name="Mol. Syst. Biol.">
        <title>Highly accurate genome sequences of Escherichia coli K-12 strains MG1655 and W3110.</title>
        <authorList>
            <person name="Hayashi K."/>
            <person name="Morooka N."/>
            <person name="Yamamoto Y."/>
            <person name="Fujita K."/>
            <person name="Isono K."/>
            <person name="Choi S."/>
            <person name="Ohtsubo E."/>
            <person name="Baba T."/>
            <person name="Wanner B.L."/>
            <person name="Mori H."/>
            <person name="Horiuchi T."/>
        </authorList>
    </citation>
    <scope>NUCLEOTIDE SEQUENCE [LARGE SCALE GENOMIC DNA]</scope>
    <source>
        <strain>K12 / W3110 / ATCC 27325 / DSM 5911</strain>
    </source>
</reference>
<reference evidence="10 11" key="4">
    <citation type="journal article" date="2010" name="J. Bacteriol.">
        <title>Crystallographic insights into the pore structures and mechanisms of the EutL and EutM shell proteins of the ethanolamine-utilizing microcompartment of Escherichia coli.</title>
        <authorList>
            <person name="Takenoya M."/>
            <person name="Nikolakakis K."/>
            <person name="Sagermann M."/>
        </authorList>
    </citation>
    <scope>X-RAY CRYSTALLOGRAPHY (2.00 ANGSTROMS)</scope>
    <scope>FUNCTION</scope>
    <scope>SUBUNIT</scope>
    <source>
        <strain>K12 / MG1655 / ATCC 47076</strain>
    </source>
</reference>
<reference evidence="9" key="5">
    <citation type="journal article" date="2010" name="Science">
        <title>Structure and mechanisms of a protein-based organelle in Escherichia coli.</title>
        <authorList>
            <person name="Tanaka S."/>
            <person name="Sawaya M.R."/>
            <person name="Yeates T.O."/>
        </authorList>
    </citation>
    <scope>X-RAY CRYSTALLOGRAPHY (2.10 ANGSTROMS)</scope>
    <scope>FUNCTION</scope>
    <scope>SUBUNIT</scope>
    <source>
        <strain>K12</strain>
    </source>
</reference>
<name>EUTM_ECOLI</name>
<proteinExistence type="evidence at protein level"/>
<comment type="function">
    <text evidence="3 4 6 7">Probably a major component of the bacterial microcompartment (BMC) shell dedicated to ethanolamine degradation (Probable). Each homohexamer has a central pore with an opening of up to 8.6 Angstroms. A positively-charged funnel leads to the pore from each side of the hexamer; a phosphate or sulfate ion is found in the pore. The pore probably allows metabolite passage into and out of the BMC (PubMed:20044574, PubMed:20851901).</text>
</comment>
<comment type="pathway">
    <text>Amine and polyamine degradation; ethanolamine degradation.</text>
</comment>
<comment type="subunit">
    <text evidence="1 3 4">Homohexamer with a central pore of up to 8.6 Angstroms diameter. The hexamers pack into a two-dimensional array (PubMed:20044574, PubMed:20851901). Interacts with EutQ (By similarity).</text>
</comment>
<comment type="subcellular location">
    <subcellularLocation>
        <location evidence="1">Bacterial microcompartment</location>
    </subcellularLocation>
</comment>
<comment type="similarity">
    <text evidence="2">Belongs to the bacterial microcompartments protein family.</text>
</comment>
<comment type="caution">
    <text evidence="8">In strain MG1655 the eut operon is interrupted by the CPZ-55 prophage, encoding 9 genes situated between eutA and eutB, which are translated in the other direction. CPZ-55 may prevent expression of the eut operon in strain MG1655. Strain W3110 does not have this prophage element and should be able to express the operon.</text>
</comment>
<protein>
    <recommendedName>
        <fullName>Bacterial microcompartment shell protein EutM</fullName>
    </recommendedName>
    <alternativeName>
        <fullName evidence="5">Bacterial microcompartment protein homohexamer</fullName>
        <shortName evidence="5">BMC-H</shortName>
    </alternativeName>
    <alternativeName>
        <fullName>Ethanolamine utilization protein EutM</fullName>
    </alternativeName>
</protein>
<feature type="chain" id="PRO_0000004786" description="Bacterial microcompartment shell protein EutM">
    <location>
        <begin position="1"/>
        <end position="97"/>
    </location>
</feature>
<feature type="domain" description="BMC" evidence="2">
    <location>
        <begin position="3"/>
        <end position="87"/>
    </location>
</feature>
<feature type="strand" evidence="13">
    <location>
        <begin position="3"/>
        <end position="11"/>
    </location>
</feature>
<feature type="helix" evidence="13">
    <location>
        <begin position="12"/>
        <end position="25"/>
    </location>
</feature>
<feature type="strand" evidence="13">
    <location>
        <begin position="26"/>
        <end position="35"/>
    </location>
</feature>
<feature type="strand" evidence="13">
    <location>
        <begin position="40"/>
        <end position="47"/>
    </location>
</feature>
<feature type="helix" evidence="13">
    <location>
        <begin position="49"/>
        <end position="66"/>
    </location>
</feature>
<feature type="strand" evidence="13">
    <location>
        <begin position="69"/>
        <end position="77"/>
    </location>
</feature>
<feature type="helix" evidence="13">
    <location>
        <begin position="81"/>
        <end position="85"/>
    </location>
</feature>
<feature type="strand" evidence="13">
    <location>
        <begin position="90"/>
        <end position="92"/>
    </location>
</feature>
<feature type="turn" evidence="12">
    <location>
        <begin position="94"/>
        <end position="97"/>
    </location>
</feature>
<evidence type="ECO:0000250" key="1">
    <source>
        <dbReference type="UniProtKB" id="P41791"/>
    </source>
</evidence>
<evidence type="ECO:0000255" key="2">
    <source>
        <dbReference type="PROSITE-ProRule" id="PRU01278"/>
    </source>
</evidence>
<evidence type="ECO:0000269" key="3">
    <source>
    </source>
</evidence>
<evidence type="ECO:0000269" key="4">
    <source>
    </source>
</evidence>
<evidence type="ECO:0000305" key="5"/>
<evidence type="ECO:0000305" key="6">
    <source>
    </source>
</evidence>
<evidence type="ECO:0000305" key="7">
    <source>
    </source>
</evidence>
<evidence type="ECO:0000305" key="8">
    <source>
    </source>
</evidence>
<evidence type="ECO:0007744" key="9">
    <source>
        <dbReference type="PDB" id="3I6P"/>
    </source>
</evidence>
<evidence type="ECO:0007744" key="10">
    <source>
        <dbReference type="PDB" id="3MPW"/>
    </source>
</evidence>
<evidence type="ECO:0007744" key="11">
    <source>
        <dbReference type="PDB" id="3MPY"/>
    </source>
</evidence>
<evidence type="ECO:0007829" key="12">
    <source>
        <dbReference type="PDB" id="3MPW"/>
    </source>
</evidence>
<evidence type="ECO:0007829" key="13">
    <source>
        <dbReference type="PDB" id="3MPY"/>
    </source>
</evidence>
<gene>
    <name type="primary">eutM</name>
    <name type="synonym">cchA</name>
    <name type="synonym">yffZ</name>
    <name type="ordered locus">b2457</name>
    <name type="ordered locus">JW2441</name>
</gene>
<organism>
    <name type="scientific">Escherichia coli (strain K12)</name>
    <dbReference type="NCBI Taxonomy" id="83333"/>
    <lineage>
        <taxon>Bacteria</taxon>
        <taxon>Pseudomonadati</taxon>
        <taxon>Pseudomonadota</taxon>
        <taxon>Gammaproteobacteria</taxon>
        <taxon>Enterobacterales</taxon>
        <taxon>Enterobacteriaceae</taxon>
        <taxon>Escherichia</taxon>
    </lineage>
</organism>
<dbReference type="EMBL" id="U00096">
    <property type="protein sequence ID" value="AAC75510.2"/>
    <property type="molecule type" value="Genomic_DNA"/>
</dbReference>
<dbReference type="EMBL" id="AP009048">
    <property type="protein sequence ID" value="BAA16335.2"/>
    <property type="molecule type" value="Genomic_DNA"/>
</dbReference>
<dbReference type="RefSeq" id="NP_416952.2">
    <property type="nucleotide sequence ID" value="NC_000913.3"/>
</dbReference>
<dbReference type="RefSeq" id="WP_000387713.1">
    <property type="nucleotide sequence ID" value="NZ_STEB01000051.1"/>
</dbReference>
<dbReference type="PDB" id="3I6P">
    <property type="method" value="X-ray"/>
    <property type="resolution" value="2.10 A"/>
    <property type="chains" value="A/B/C/D/E/F=1-97"/>
</dbReference>
<dbReference type="PDB" id="3MPW">
    <property type="method" value="X-ray"/>
    <property type="resolution" value="2.70 A"/>
    <property type="chains" value="A/B/C/D/E/F/G/H/I/J/K/L=1-97"/>
</dbReference>
<dbReference type="PDB" id="3MPY">
    <property type="method" value="X-ray"/>
    <property type="resolution" value="2.00 A"/>
    <property type="chains" value="A=1-97"/>
</dbReference>
<dbReference type="PDBsum" id="3I6P"/>
<dbReference type="PDBsum" id="3MPW"/>
<dbReference type="PDBsum" id="3MPY"/>
<dbReference type="SMR" id="P0ABF4"/>
<dbReference type="BioGRID" id="4260926">
    <property type="interactions" value="12"/>
</dbReference>
<dbReference type="DIP" id="DIP-9537N"/>
<dbReference type="FunCoup" id="P0ABF4">
    <property type="interactions" value="246"/>
</dbReference>
<dbReference type="IntAct" id="P0ABF4">
    <property type="interactions" value="2"/>
</dbReference>
<dbReference type="STRING" id="511145.b2457"/>
<dbReference type="TCDB" id="1.S.1.1.2">
    <property type="family name" value="the bacterial microcompartment shell/pore-forming protein-1 (bmc-sp1) family"/>
</dbReference>
<dbReference type="PaxDb" id="511145-b2457"/>
<dbReference type="EnsemblBacteria" id="AAC75510">
    <property type="protein sequence ID" value="AAC75510"/>
    <property type="gene ID" value="b2457"/>
</dbReference>
<dbReference type="GeneID" id="93774683"/>
<dbReference type="GeneID" id="946942"/>
<dbReference type="KEGG" id="ecj:JW2441"/>
<dbReference type="KEGG" id="eco:b2457"/>
<dbReference type="KEGG" id="ecoc:C3026_13635"/>
<dbReference type="PATRIC" id="fig|511145.12.peg.2551"/>
<dbReference type="EchoBASE" id="EB3939"/>
<dbReference type="eggNOG" id="COG4577">
    <property type="taxonomic scope" value="Bacteria"/>
</dbReference>
<dbReference type="HOGENOM" id="CLU_064903_5_3_6"/>
<dbReference type="InParanoid" id="P0ABF4"/>
<dbReference type="OMA" id="QFREGVN"/>
<dbReference type="OrthoDB" id="9812608at2"/>
<dbReference type="PhylomeDB" id="P0ABF4"/>
<dbReference type="BioCyc" id="EcoCyc:G7287-MONOMER"/>
<dbReference type="UniPathway" id="UPA00560"/>
<dbReference type="EvolutionaryTrace" id="P0ABF4"/>
<dbReference type="PRO" id="PR:P0ABF4"/>
<dbReference type="Proteomes" id="UP000000625">
    <property type="component" value="Chromosome"/>
</dbReference>
<dbReference type="GO" id="GO:0031471">
    <property type="term" value="C:ethanolamine degradation polyhedral organelle"/>
    <property type="evidence" value="ECO:0000250"/>
    <property type="project" value="EcoCyc"/>
</dbReference>
<dbReference type="GO" id="GO:0042802">
    <property type="term" value="F:identical protein binding"/>
    <property type="evidence" value="ECO:0000314"/>
    <property type="project" value="EcoCyc"/>
</dbReference>
<dbReference type="GO" id="GO:0005198">
    <property type="term" value="F:structural molecule activity"/>
    <property type="evidence" value="ECO:0000250"/>
    <property type="project" value="EcoCyc"/>
</dbReference>
<dbReference type="GO" id="GO:0046336">
    <property type="term" value="P:ethanolamine catabolic process"/>
    <property type="evidence" value="ECO:0007669"/>
    <property type="project" value="UniProtKB-UniPathway"/>
</dbReference>
<dbReference type="GO" id="GO:0034214">
    <property type="term" value="P:protein hexamerization"/>
    <property type="evidence" value="ECO:0000314"/>
    <property type="project" value="EcoCyc"/>
</dbReference>
<dbReference type="CDD" id="cd07045">
    <property type="entry name" value="BMC_CcmK_like"/>
    <property type="match status" value="1"/>
</dbReference>
<dbReference type="FunFam" id="3.30.70.1710:FF:000001">
    <property type="entry name" value="Ethanolamine utilization protein EutM"/>
    <property type="match status" value="1"/>
</dbReference>
<dbReference type="Gene3D" id="3.30.70.1710">
    <property type="match status" value="1"/>
</dbReference>
<dbReference type="InterPro" id="IPR020808">
    <property type="entry name" value="Bact_microcomp_CS"/>
</dbReference>
<dbReference type="InterPro" id="IPR000249">
    <property type="entry name" value="BMC_dom"/>
</dbReference>
<dbReference type="InterPro" id="IPR050575">
    <property type="entry name" value="BMC_shell"/>
</dbReference>
<dbReference type="InterPro" id="IPR037233">
    <property type="entry name" value="CcmK-like_sf"/>
</dbReference>
<dbReference type="InterPro" id="IPR044872">
    <property type="entry name" value="CcmK/CsoS1_BMC"/>
</dbReference>
<dbReference type="NCBIfam" id="NF012018">
    <property type="entry name" value="PRK15474.1"/>
    <property type="match status" value="1"/>
</dbReference>
<dbReference type="PANTHER" id="PTHR33941:SF10">
    <property type="entry name" value="BACTERIAL MICROCOMPARTMENT SHELL PROTEIN EUTM"/>
    <property type="match status" value="1"/>
</dbReference>
<dbReference type="PANTHER" id="PTHR33941">
    <property type="entry name" value="PROPANEDIOL UTILIZATION PROTEIN PDUA"/>
    <property type="match status" value="1"/>
</dbReference>
<dbReference type="Pfam" id="PF00936">
    <property type="entry name" value="BMC"/>
    <property type="match status" value="1"/>
</dbReference>
<dbReference type="SMART" id="SM00877">
    <property type="entry name" value="BMC"/>
    <property type="match status" value="1"/>
</dbReference>
<dbReference type="SUPFAM" id="SSF143414">
    <property type="entry name" value="CcmK-like"/>
    <property type="match status" value="1"/>
</dbReference>
<dbReference type="PROSITE" id="PS01139">
    <property type="entry name" value="BMC_1"/>
    <property type="match status" value="1"/>
</dbReference>
<dbReference type="PROSITE" id="PS51930">
    <property type="entry name" value="BMC_2"/>
    <property type="match status" value="1"/>
</dbReference>
<accession>P0ABF4</accession>
<accession>P77606</accession>
<sequence length="97" mass="9866">MEALGMIETRGLVALIEASDAMVKAARVKLVGVKQIGGGLCTAMVRGDVAACKAATDAGAAAAQRIGELVSVHVIPRPHGDLEEVFPIGLKGDSSNL</sequence>
<keyword id="KW-0002">3D-structure</keyword>
<keyword id="KW-1283">Bacterial microcompartment</keyword>
<keyword id="KW-1185">Reference proteome</keyword>